<gene>
    <name evidence="1" type="primary">rps4</name>
    <name type="ordered locus">Mpal_2387</name>
</gene>
<protein>
    <recommendedName>
        <fullName evidence="1">Small ribosomal subunit protein uS4</fullName>
    </recommendedName>
    <alternativeName>
        <fullName evidence="3">30S ribosomal protein S4</fullName>
    </alternativeName>
</protein>
<sequence>MGYPGKNTKGYEAPKRPFEKQRIEDETRIVIEYGLRNKREVWRAQSVLRRYRKAARELLAFMSQSSDEQQIATKKEHLLGHLNRIGLLGPDADIGDVLSLKIQQPLERRLQTMVYRQGLARSPKQARQMVTHGHIAIAGRRVDIPSYRVPRDQETLISYYGTSPLTSEGHPEIERINKKRR</sequence>
<feature type="chain" id="PRO_1000165412" description="Small ribosomal subunit protein uS4">
    <location>
        <begin position="1"/>
        <end position="181"/>
    </location>
</feature>
<feature type="domain" description="S4 RNA-binding" evidence="1">
    <location>
        <begin position="108"/>
        <end position="177"/>
    </location>
</feature>
<feature type="region of interest" description="Disordered" evidence="2">
    <location>
        <begin position="161"/>
        <end position="181"/>
    </location>
</feature>
<feature type="compositionally biased region" description="Basic and acidic residues" evidence="2">
    <location>
        <begin position="169"/>
        <end position="181"/>
    </location>
</feature>
<name>RS4_METPE</name>
<comment type="function">
    <text evidence="1">One of the primary rRNA binding proteins, it binds directly to 16S rRNA where it nucleates assembly of the body of the 30S subunit.</text>
</comment>
<comment type="function">
    <text evidence="1">With S5 and S12 plays an important role in translational accuracy.</text>
</comment>
<comment type="subunit">
    <text evidence="1">Part of the 30S ribosomal subunit. Contacts protein S5. The interaction surface between S4 and S5 is involved in control of translational fidelity.</text>
</comment>
<comment type="similarity">
    <text evidence="1">Belongs to the universal ribosomal protein uS4 family.</text>
</comment>
<keyword id="KW-1185">Reference proteome</keyword>
<keyword id="KW-0687">Ribonucleoprotein</keyword>
<keyword id="KW-0689">Ribosomal protein</keyword>
<keyword id="KW-0694">RNA-binding</keyword>
<keyword id="KW-0699">rRNA-binding</keyword>
<accession>B8GEG7</accession>
<evidence type="ECO:0000255" key="1">
    <source>
        <dbReference type="HAMAP-Rule" id="MF_01306"/>
    </source>
</evidence>
<evidence type="ECO:0000256" key="2">
    <source>
        <dbReference type="SAM" id="MobiDB-lite"/>
    </source>
</evidence>
<evidence type="ECO:0000305" key="3"/>
<organism>
    <name type="scientific">Methanosphaerula palustris (strain ATCC BAA-1556 / DSM 19958 / E1-9c)</name>
    <dbReference type="NCBI Taxonomy" id="521011"/>
    <lineage>
        <taxon>Archaea</taxon>
        <taxon>Methanobacteriati</taxon>
        <taxon>Methanobacteriota</taxon>
        <taxon>Stenosarchaea group</taxon>
        <taxon>Methanomicrobia</taxon>
        <taxon>Methanomicrobiales</taxon>
        <taxon>Methanoregulaceae</taxon>
        <taxon>Methanosphaerula</taxon>
    </lineage>
</organism>
<dbReference type="EMBL" id="CP001338">
    <property type="protein sequence ID" value="ACL17668.1"/>
    <property type="molecule type" value="Genomic_DNA"/>
</dbReference>
<dbReference type="RefSeq" id="WP_012618987.1">
    <property type="nucleotide sequence ID" value="NC_011832.1"/>
</dbReference>
<dbReference type="SMR" id="B8GEG7"/>
<dbReference type="STRING" id="521011.Mpal_2387"/>
<dbReference type="GeneID" id="7272109"/>
<dbReference type="KEGG" id="mpl:Mpal_2387"/>
<dbReference type="eggNOG" id="arCOG04239">
    <property type="taxonomic scope" value="Archaea"/>
</dbReference>
<dbReference type="HOGENOM" id="CLU_089738_1_1_2"/>
<dbReference type="OrthoDB" id="10429at2157"/>
<dbReference type="Proteomes" id="UP000002457">
    <property type="component" value="Chromosome"/>
</dbReference>
<dbReference type="GO" id="GO:0015935">
    <property type="term" value="C:small ribosomal subunit"/>
    <property type="evidence" value="ECO:0007669"/>
    <property type="project" value="InterPro"/>
</dbReference>
<dbReference type="GO" id="GO:0019843">
    <property type="term" value="F:rRNA binding"/>
    <property type="evidence" value="ECO:0007669"/>
    <property type="project" value="UniProtKB-UniRule"/>
</dbReference>
<dbReference type="GO" id="GO:0003735">
    <property type="term" value="F:structural constituent of ribosome"/>
    <property type="evidence" value="ECO:0007669"/>
    <property type="project" value="InterPro"/>
</dbReference>
<dbReference type="GO" id="GO:0042274">
    <property type="term" value="P:ribosomal small subunit biogenesis"/>
    <property type="evidence" value="ECO:0007669"/>
    <property type="project" value="TreeGrafter"/>
</dbReference>
<dbReference type="GO" id="GO:0006412">
    <property type="term" value="P:translation"/>
    <property type="evidence" value="ECO:0007669"/>
    <property type="project" value="UniProtKB-UniRule"/>
</dbReference>
<dbReference type="CDD" id="cd00165">
    <property type="entry name" value="S4"/>
    <property type="match status" value="1"/>
</dbReference>
<dbReference type="Gene3D" id="3.10.290.10">
    <property type="entry name" value="RNA-binding S4 domain"/>
    <property type="match status" value="1"/>
</dbReference>
<dbReference type="HAMAP" id="MF_01306_A">
    <property type="entry name" value="Ribosomal_uS4_A"/>
    <property type="match status" value="1"/>
</dbReference>
<dbReference type="InterPro" id="IPR022801">
    <property type="entry name" value="Ribosomal_uS4"/>
</dbReference>
<dbReference type="InterPro" id="IPR022802">
    <property type="entry name" value="Ribosomal_uS4_arc"/>
</dbReference>
<dbReference type="InterPro" id="IPR018079">
    <property type="entry name" value="Ribosomal_uS4_CS"/>
</dbReference>
<dbReference type="InterPro" id="IPR005710">
    <property type="entry name" value="Ribosomal_uS4_euk/arc"/>
</dbReference>
<dbReference type="InterPro" id="IPR001912">
    <property type="entry name" value="Ribosomal_uS4_N"/>
</dbReference>
<dbReference type="InterPro" id="IPR002942">
    <property type="entry name" value="S4_RNA-bd"/>
</dbReference>
<dbReference type="InterPro" id="IPR036986">
    <property type="entry name" value="S4_RNA-bd_sf"/>
</dbReference>
<dbReference type="NCBIfam" id="NF003139">
    <property type="entry name" value="PRK04051.1"/>
    <property type="match status" value="1"/>
</dbReference>
<dbReference type="NCBIfam" id="TIGR01018">
    <property type="entry name" value="uS4_arch"/>
    <property type="match status" value="1"/>
</dbReference>
<dbReference type="PANTHER" id="PTHR11831">
    <property type="entry name" value="30S 40S RIBOSOMAL PROTEIN"/>
    <property type="match status" value="1"/>
</dbReference>
<dbReference type="PANTHER" id="PTHR11831:SF5">
    <property type="entry name" value="40S RIBOSOMAL PROTEIN S9"/>
    <property type="match status" value="1"/>
</dbReference>
<dbReference type="Pfam" id="PF01479">
    <property type="entry name" value="S4"/>
    <property type="match status" value="1"/>
</dbReference>
<dbReference type="SMART" id="SM01390">
    <property type="entry name" value="Ribosomal_S4"/>
    <property type="match status" value="1"/>
</dbReference>
<dbReference type="SMART" id="SM00363">
    <property type="entry name" value="S4"/>
    <property type="match status" value="1"/>
</dbReference>
<dbReference type="SUPFAM" id="SSF55174">
    <property type="entry name" value="Alpha-L RNA-binding motif"/>
    <property type="match status" value="1"/>
</dbReference>
<dbReference type="PROSITE" id="PS00632">
    <property type="entry name" value="RIBOSOMAL_S4"/>
    <property type="match status" value="1"/>
</dbReference>
<dbReference type="PROSITE" id="PS50889">
    <property type="entry name" value="S4"/>
    <property type="match status" value="1"/>
</dbReference>
<proteinExistence type="inferred from homology"/>
<reference key="1">
    <citation type="journal article" date="2015" name="Genome Announc.">
        <title>Complete Genome Sequence of Methanosphaerula palustris E1-9CT, a Hydrogenotrophic Methanogen Isolated from a Minerotrophic Fen Peatland.</title>
        <authorList>
            <person name="Cadillo-Quiroz H."/>
            <person name="Browne P."/>
            <person name="Kyrpides N."/>
            <person name="Woyke T."/>
            <person name="Goodwin L."/>
            <person name="Detter C."/>
            <person name="Yavitt J.B."/>
            <person name="Zinder S.H."/>
        </authorList>
    </citation>
    <scope>NUCLEOTIDE SEQUENCE [LARGE SCALE GENOMIC DNA]</scope>
    <source>
        <strain>ATCC BAA-1556 / DSM 19958 / E1-9c</strain>
    </source>
</reference>